<protein>
    <recommendedName>
        <fullName evidence="1">NADH-quinone oxidoreductase subunit C</fullName>
        <ecNumber evidence="1">7.1.1.-</ecNumber>
    </recommendedName>
    <alternativeName>
        <fullName evidence="1">NADH dehydrogenase I subunit C</fullName>
    </alternativeName>
    <alternativeName>
        <fullName evidence="1">NDH-1 subunit C</fullName>
    </alternativeName>
</protein>
<keyword id="KW-0997">Cell inner membrane</keyword>
<keyword id="KW-1003">Cell membrane</keyword>
<keyword id="KW-0472">Membrane</keyword>
<keyword id="KW-0520">NAD</keyword>
<keyword id="KW-0874">Quinone</keyword>
<keyword id="KW-1278">Translocase</keyword>
<keyword id="KW-0813">Transport</keyword>
<keyword id="KW-0830">Ubiquinone</keyword>
<organism>
    <name type="scientific">Ralstonia pickettii (strain 12J)</name>
    <dbReference type="NCBI Taxonomy" id="402626"/>
    <lineage>
        <taxon>Bacteria</taxon>
        <taxon>Pseudomonadati</taxon>
        <taxon>Pseudomonadota</taxon>
        <taxon>Betaproteobacteria</taxon>
        <taxon>Burkholderiales</taxon>
        <taxon>Burkholderiaceae</taxon>
        <taxon>Ralstonia</taxon>
    </lineage>
</organism>
<proteinExistence type="inferred from homology"/>
<accession>B2U7Q9</accession>
<sequence>MTDKLATLKAALEKALGNRVQSLTESVGELTLVVKAADYLDAMRTLRDDASLKFEQLMDLCGVDYADYGDGAWNGPRFAAVSHLLSITHNWRVRVRVFAPDDDLPVVSSVTTIWNSADWFEREAFDLYGLVFEGHPDLRRILTDYGFIGHPFRKDFPVSGYVEMRYDPVQRRVVYQPVTIEPREITPRVIREDQYGGLKH</sequence>
<gene>
    <name evidence="1" type="primary">nuoC</name>
    <name type="ordered locus">Rpic_2212</name>
</gene>
<name>NUOC_RALPJ</name>
<comment type="function">
    <text evidence="1">NDH-1 shuttles electrons from NADH, via FMN and iron-sulfur (Fe-S) centers, to quinones in the respiratory chain. The immediate electron acceptor for the enzyme in this species is believed to be ubiquinone. Couples the redox reaction to proton translocation (for every two electrons transferred, four hydrogen ions are translocated across the cytoplasmic membrane), and thus conserves the redox energy in a proton gradient.</text>
</comment>
<comment type="catalytic activity">
    <reaction evidence="1">
        <text>a quinone + NADH + 5 H(+)(in) = a quinol + NAD(+) + 4 H(+)(out)</text>
        <dbReference type="Rhea" id="RHEA:57888"/>
        <dbReference type="ChEBI" id="CHEBI:15378"/>
        <dbReference type="ChEBI" id="CHEBI:24646"/>
        <dbReference type="ChEBI" id="CHEBI:57540"/>
        <dbReference type="ChEBI" id="CHEBI:57945"/>
        <dbReference type="ChEBI" id="CHEBI:132124"/>
    </reaction>
</comment>
<comment type="subunit">
    <text evidence="1">NDH-1 is composed of 14 different subunits. Subunits NuoB, C, D, E, F, and G constitute the peripheral sector of the complex.</text>
</comment>
<comment type="subcellular location">
    <subcellularLocation>
        <location evidence="1">Cell inner membrane</location>
        <topology evidence="1">Peripheral membrane protein</topology>
        <orientation evidence="1">Cytoplasmic side</orientation>
    </subcellularLocation>
</comment>
<comment type="similarity">
    <text evidence="1">Belongs to the complex I 30 kDa subunit family.</text>
</comment>
<reference key="1">
    <citation type="submission" date="2008-05" db="EMBL/GenBank/DDBJ databases">
        <title>Complete sequence of chromosome 1 of Ralstonia pickettii 12J.</title>
        <authorList>
            <person name="Lucas S."/>
            <person name="Copeland A."/>
            <person name="Lapidus A."/>
            <person name="Glavina del Rio T."/>
            <person name="Dalin E."/>
            <person name="Tice H."/>
            <person name="Bruce D."/>
            <person name="Goodwin L."/>
            <person name="Pitluck S."/>
            <person name="Meincke L."/>
            <person name="Brettin T."/>
            <person name="Detter J.C."/>
            <person name="Han C."/>
            <person name="Kuske C.R."/>
            <person name="Schmutz J."/>
            <person name="Larimer F."/>
            <person name="Land M."/>
            <person name="Hauser L."/>
            <person name="Kyrpides N."/>
            <person name="Mikhailova N."/>
            <person name="Marsh T."/>
            <person name="Richardson P."/>
        </authorList>
    </citation>
    <scope>NUCLEOTIDE SEQUENCE [LARGE SCALE GENOMIC DNA]</scope>
    <source>
        <strain>12J</strain>
    </source>
</reference>
<feature type="chain" id="PRO_0000358176" description="NADH-quinone oxidoreductase subunit C">
    <location>
        <begin position="1"/>
        <end position="200"/>
    </location>
</feature>
<dbReference type="EC" id="7.1.1.-" evidence="1"/>
<dbReference type="EMBL" id="CP001068">
    <property type="protein sequence ID" value="ACD27346.1"/>
    <property type="molecule type" value="Genomic_DNA"/>
</dbReference>
<dbReference type="SMR" id="B2U7Q9"/>
<dbReference type="STRING" id="402626.Rpic_2212"/>
<dbReference type="KEGG" id="rpi:Rpic_2212"/>
<dbReference type="eggNOG" id="COG0852">
    <property type="taxonomic scope" value="Bacteria"/>
</dbReference>
<dbReference type="HOGENOM" id="CLU_042628_2_1_4"/>
<dbReference type="GO" id="GO:0005886">
    <property type="term" value="C:plasma membrane"/>
    <property type="evidence" value="ECO:0007669"/>
    <property type="project" value="UniProtKB-SubCell"/>
</dbReference>
<dbReference type="GO" id="GO:0008137">
    <property type="term" value="F:NADH dehydrogenase (ubiquinone) activity"/>
    <property type="evidence" value="ECO:0007669"/>
    <property type="project" value="InterPro"/>
</dbReference>
<dbReference type="GO" id="GO:0050136">
    <property type="term" value="F:NADH:ubiquinone reductase (non-electrogenic) activity"/>
    <property type="evidence" value="ECO:0007669"/>
    <property type="project" value="UniProtKB-UniRule"/>
</dbReference>
<dbReference type="GO" id="GO:0048038">
    <property type="term" value="F:quinone binding"/>
    <property type="evidence" value="ECO:0007669"/>
    <property type="project" value="UniProtKB-KW"/>
</dbReference>
<dbReference type="Gene3D" id="3.30.460.80">
    <property type="entry name" value="NADH:ubiquinone oxidoreductase, 30kDa subunit"/>
    <property type="match status" value="1"/>
</dbReference>
<dbReference type="HAMAP" id="MF_01357">
    <property type="entry name" value="NDH1_NuoC"/>
    <property type="match status" value="1"/>
</dbReference>
<dbReference type="InterPro" id="IPR010218">
    <property type="entry name" value="NADH_DH_suC"/>
</dbReference>
<dbReference type="InterPro" id="IPR037232">
    <property type="entry name" value="NADH_quin_OxRdtase_su_C/D-like"/>
</dbReference>
<dbReference type="InterPro" id="IPR001268">
    <property type="entry name" value="NADH_UbQ_OxRdtase_30kDa_su"/>
</dbReference>
<dbReference type="InterPro" id="IPR020396">
    <property type="entry name" value="NADH_UbQ_OxRdtase_CS"/>
</dbReference>
<dbReference type="NCBIfam" id="TIGR01961">
    <property type="entry name" value="NuoC_fam"/>
    <property type="match status" value="1"/>
</dbReference>
<dbReference type="NCBIfam" id="NF004730">
    <property type="entry name" value="PRK06074.1-1"/>
    <property type="match status" value="1"/>
</dbReference>
<dbReference type="PANTHER" id="PTHR10884:SF14">
    <property type="entry name" value="NADH DEHYDROGENASE [UBIQUINONE] IRON-SULFUR PROTEIN 3, MITOCHONDRIAL"/>
    <property type="match status" value="1"/>
</dbReference>
<dbReference type="PANTHER" id="PTHR10884">
    <property type="entry name" value="NADH DEHYDROGENASE UBIQUINONE IRON-SULFUR PROTEIN 3"/>
    <property type="match status" value="1"/>
</dbReference>
<dbReference type="Pfam" id="PF00329">
    <property type="entry name" value="Complex1_30kDa"/>
    <property type="match status" value="1"/>
</dbReference>
<dbReference type="SUPFAM" id="SSF143243">
    <property type="entry name" value="Nqo5-like"/>
    <property type="match status" value="1"/>
</dbReference>
<dbReference type="PROSITE" id="PS00542">
    <property type="entry name" value="COMPLEX1_30K"/>
    <property type="match status" value="1"/>
</dbReference>
<evidence type="ECO:0000255" key="1">
    <source>
        <dbReference type="HAMAP-Rule" id="MF_01357"/>
    </source>
</evidence>